<protein>
    <recommendedName>
        <fullName evidence="1">C4-dicarboxylate transport protein</fullName>
    </recommendedName>
</protein>
<proteinExistence type="inferred from homology"/>
<keyword id="KW-0997">Cell inner membrane</keyword>
<keyword id="KW-1003">Cell membrane</keyword>
<keyword id="KW-0472">Membrane</keyword>
<keyword id="KW-0769">Symport</keyword>
<keyword id="KW-0812">Transmembrane</keyword>
<keyword id="KW-1133">Transmembrane helix</keyword>
<keyword id="KW-0813">Transport</keyword>
<feature type="chain" id="PRO_1000067477" description="C4-dicarboxylate transport protein">
    <location>
        <begin position="1"/>
        <end position="429"/>
    </location>
</feature>
<feature type="transmembrane region" description="Helical" evidence="1">
    <location>
        <begin position="3"/>
        <end position="23"/>
    </location>
</feature>
<feature type="transmembrane region" description="Helical" evidence="1">
    <location>
        <begin position="44"/>
        <end position="64"/>
    </location>
</feature>
<feature type="transmembrane region" description="Helical" evidence="1">
    <location>
        <begin position="76"/>
        <end position="96"/>
    </location>
</feature>
<feature type="transmembrane region" description="Helical" evidence="1">
    <location>
        <begin position="144"/>
        <end position="164"/>
    </location>
</feature>
<feature type="transmembrane region" description="Helical" evidence="1">
    <location>
        <begin position="184"/>
        <end position="204"/>
    </location>
</feature>
<feature type="transmembrane region" description="Helical" evidence="1">
    <location>
        <begin position="222"/>
        <end position="242"/>
    </location>
</feature>
<feature type="transmembrane region" description="Helical" evidence="1">
    <location>
        <begin position="331"/>
        <end position="351"/>
    </location>
</feature>
<feature type="transmembrane region" description="Helical" evidence="1">
    <location>
        <begin position="352"/>
        <end position="372"/>
    </location>
</feature>
<sequence>MKVSIFKTLYFQVLTAITIGVLLGHFYPEIGAQMKPLGDGFVKLIKMIIAPVIFCTVVTGIAGMESMKAVGRTGAIALLYFEIVSTLALLIGLVVVNVAQPGVGMNIDPATLDAKAVALYAEQASQQGIIPFLLDIIPGSVVGAFASGNILQVLLFAVLFGFALHRLGEKGQLIFNVIESFSRVIFGVINMIMRLAPLGAFGAMAFTIGKYGVGSLVQLGQLILCFYLTCILFVVLVLGTIAKFNGFNIFKFIRYIKEELLIVLGTSSSESVLPRMLDKMENAGCKKSVVGLVIPTGYSFNLDGTSIYLTMAAVFIAQATNTHMDIMHQVTLLVVLLLSSKGAAGVTGSGFIVLAATISAVGHLPLAGLALILGIDRFMSEARALTNLVGNGVATIVVAKWCKQLDNDQLQAVLSNKVLPNVKSSVSVS</sequence>
<comment type="function">
    <text evidence="1">Responsible for the transport of dicarboxylates such as succinate, fumarate, and malate from the periplasm across the membrane.</text>
</comment>
<comment type="subcellular location">
    <subcellularLocation>
        <location evidence="1">Cell inner membrane</location>
        <topology evidence="1">Multi-pass membrane protein</topology>
    </subcellularLocation>
</comment>
<comment type="similarity">
    <text evidence="1">Belongs to the dicarboxylate/amino acid:cation symporter (DAACS) (TC 2.A.23) family.</text>
</comment>
<evidence type="ECO:0000255" key="1">
    <source>
        <dbReference type="HAMAP-Rule" id="MF_01300"/>
    </source>
</evidence>
<gene>
    <name evidence="1" type="primary">dctA</name>
    <name type="ordered locus">YPDSF_3358</name>
</gene>
<reference key="1">
    <citation type="submission" date="2007-02" db="EMBL/GenBank/DDBJ databases">
        <title>Complete sequence of chromosome of Yersinia pestis Pestoides F.</title>
        <authorList>
            <consortium name="US DOE Joint Genome Institute"/>
            <person name="Copeland A."/>
            <person name="Lucas S."/>
            <person name="Lapidus A."/>
            <person name="Barry K."/>
            <person name="Detter J.C."/>
            <person name="Glavina del Rio T."/>
            <person name="Hammon N."/>
            <person name="Israni S."/>
            <person name="Dalin E."/>
            <person name="Tice H."/>
            <person name="Pitluck S."/>
            <person name="Di Bartolo G."/>
            <person name="Chain P."/>
            <person name="Malfatti S."/>
            <person name="Shin M."/>
            <person name="Vergez L."/>
            <person name="Schmutz J."/>
            <person name="Larimer F."/>
            <person name="Land M."/>
            <person name="Hauser L."/>
            <person name="Worsham P."/>
            <person name="Chu M."/>
            <person name="Bearden S."/>
            <person name="Garcia E."/>
            <person name="Richardson P."/>
        </authorList>
    </citation>
    <scope>NUCLEOTIDE SEQUENCE [LARGE SCALE GENOMIC DNA]</scope>
    <source>
        <strain>Pestoides F</strain>
    </source>
</reference>
<accession>A4TR01</accession>
<name>DCTA_YERPP</name>
<organism>
    <name type="scientific">Yersinia pestis (strain Pestoides F)</name>
    <dbReference type="NCBI Taxonomy" id="386656"/>
    <lineage>
        <taxon>Bacteria</taxon>
        <taxon>Pseudomonadati</taxon>
        <taxon>Pseudomonadota</taxon>
        <taxon>Gammaproteobacteria</taxon>
        <taxon>Enterobacterales</taxon>
        <taxon>Yersiniaceae</taxon>
        <taxon>Yersinia</taxon>
    </lineage>
</organism>
<dbReference type="EMBL" id="CP000668">
    <property type="protein sequence ID" value="ABP41713.1"/>
    <property type="molecule type" value="Genomic_DNA"/>
</dbReference>
<dbReference type="RefSeq" id="WP_002209553.1">
    <property type="nucleotide sequence ID" value="NZ_CP009715.1"/>
</dbReference>
<dbReference type="SMR" id="A4TR01"/>
<dbReference type="KEGG" id="ypp:YPDSF_3358"/>
<dbReference type="PATRIC" id="fig|386656.14.peg.973"/>
<dbReference type="GO" id="GO:0005886">
    <property type="term" value="C:plasma membrane"/>
    <property type="evidence" value="ECO:0007669"/>
    <property type="project" value="UniProtKB-SubCell"/>
</dbReference>
<dbReference type="GO" id="GO:0015138">
    <property type="term" value="F:fumarate transmembrane transporter activity"/>
    <property type="evidence" value="ECO:0007669"/>
    <property type="project" value="TreeGrafter"/>
</dbReference>
<dbReference type="GO" id="GO:0015366">
    <property type="term" value="F:malate:proton symporter activity"/>
    <property type="evidence" value="ECO:0007669"/>
    <property type="project" value="TreeGrafter"/>
</dbReference>
<dbReference type="GO" id="GO:0015141">
    <property type="term" value="F:succinate transmembrane transporter activity"/>
    <property type="evidence" value="ECO:0007669"/>
    <property type="project" value="TreeGrafter"/>
</dbReference>
<dbReference type="GO" id="GO:0070778">
    <property type="term" value="P:L-aspartate transmembrane transport"/>
    <property type="evidence" value="ECO:0007669"/>
    <property type="project" value="TreeGrafter"/>
</dbReference>
<dbReference type="FunFam" id="1.10.3860.10:FF:000001">
    <property type="entry name" value="C4-dicarboxylate transport protein"/>
    <property type="match status" value="1"/>
</dbReference>
<dbReference type="Gene3D" id="1.10.3860.10">
    <property type="entry name" value="Sodium:dicarboxylate symporter"/>
    <property type="match status" value="1"/>
</dbReference>
<dbReference type="HAMAP" id="MF_01300">
    <property type="entry name" value="C4_dicarb_transport"/>
    <property type="match status" value="1"/>
</dbReference>
<dbReference type="InterPro" id="IPR023954">
    <property type="entry name" value="C4_dicarb_transport"/>
</dbReference>
<dbReference type="InterPro" id="IPR001991">
    <property type="entry name" value="Na-dicarboxylate_symporter"/>
</dbReference>
<dbReference type="InterPro" id="IPR018107">
    <property type="entry name" value="Na-dicarboxylate_symporter_CS"/>
</dbReference>
<dbReference type="InterPro" id="IPR036458">
    <property type="entry name" value="Na:dicarbo_symporter_sf"/>
</dbReference>
<dbReference type="NCBIfam" id="NF002461">
    <property type="entry name" value="PRK01663.1"/>
    <property type="match status" value="1"/>
</dbReference>
<dbReference type="NCBIfam" id="NF009587">
    <property type="entry name" value="PRK13027.1"/>
    <property type="match status" value="1"/>
</dbReference>
<dbReference type="PANTHER" id="PTHR42865:SF1">
    <property type="entry name" value="AEROBIC C4-DICARBOXYLATE TRANSPORT PROTEIN"/>
    <property type="match status" value="1"/>
</dbReference>
<dbReference type="PANTHER" id="PTHR42865">
    <property type="entry name" value="PROTON/GLUTAMATE-ASPARTATE SYMPORTER"/>
    <property type="match status" value="1"/>
</dbReference>
<dbReference type="Pfam" id="PF00375">
    <property type="entry name" value="SDF"/>
    <property type="match status" value="1"/>
</dbReference>
<dbReference type="PRINTS" id="PR00173">
    <property type="entry name" value="EDTRNSPORT"/>
</dbReference>
<dbReference type="SUPFAM" id="SSF118215">
    <property type="entry name" value="Proton glutamate symport protein"/>
    <property type="match status" value="1"/>
</dbReference>
<dbReference type="PROSITE" id="PS00713">
    <property type="entry name" value="NA_DICARBOXYL_SYMP_1"/>
    <property type="match status" value="1"/>
</dbReference>
<dbReference type="PROSITE" id="PS00714">
    <property type="entry name" value="NA_DICARBOXYL_SYMP_2"/>
    <property type="match status" value="1"/>
</dbReference>